<dbReference type="EC" id="2.7.7.60" evidence="1"/>
<dbReference type="EMBL" id="CP000124">
    <property type="protein sequence ID" value="ABA48835.1"/>
    <property type="molecule type" value="Genomic_DNA"/>
</dbReference>
<dbReference type="RefSeq" id="WP_004191584.1">
    <property type="nucleotide sequence ID" value="NC_007434.1"/>
</dbReference>
<dbReference type="SMR" id="Q3JR99"/>
<dbReference type="EnsemblBacteria" id="ABA48835">
    <property type="protein sequence ID" value="ABA48835"/>
    <property type="gene ID" value="BURPS1710b_2512"/>
</dbReference>
<dbReference type="GeneID" id="93060628"/>
<dbReference type="KEGG" id="bpm:BURPS1710b_2512"/>
<dbReference type="HOGENOM" id="CLU_061281_3_0_4"/>
<dbReference type="UniPathway" id="UPA00056">
    <property type="reaction ID" value="UER00093"/>
</dbReference>
<dbReference type="Proteomes" id="UP000002700">
    <property type="component" value="Chromosome I"/>
</dbReference>
<dbReference type="GO" id="GO:0050518">
    <property type="term" value="F:2-C-methyl-D-erythritol 4-phosphate cytidylyltransferase activity"/>
    <property type="evidence" value="ECO:0007669"/>
    <property type="project" value="UniProtKB-UniRule"/>
</dbReference>
<dbReference type="GO" id="GO:0019288">
    <property type="term" value="P:isopentenyl diphosphate biosynthetic process, methylerythritol 4-phosphate pathway"/>
    <property type="evidence" value="ECO:0007669"/>
    <property type="project" value="UniProtKB-UniRule"/>
</dbReference>
<dbReference type="CDD" id="cd02516">
    <property type="entry name" value="CDP-ME_synthetase"/>
    <property type="match status" value="1"/>
</dbReference>
<dbReference type="FunFam" id="3.90.550.10:FF:000003">
    <property type="entry name" value="2-C-methyl-D-erythritol 4-phosphate cytidylyltransferase"/>
    <property type="match status" value="1"/>
</dbReference>
<dbReference type="Gene3D" id="3.90.550.10">
    <property type="entry name" value="Spore Coat Polysaccharide Biosynthesis Protein SpsA, Chain A"/>
    <property type="match status" value="1"/>
</dbReference>
<dbReference type="HAMAP" id="MF_00108">
    <property type="entry name" value="IspD"/>
    <property type="match status" value="1"/>
</dbReference>
<dbReference type="InterPro" id="IPR001228">
    <property type="entry name" value="IspD"/>
</dbReference>
<dbReference type="InterPro" id="IPR034683">
    <property type="entry name" value="IspD/TarI"/>
</dbReference>
<dbReference type="InterPro" id="IPR050088">
    <property type="entry name" value="IspD/TarI_cytidylyltransf_bact"/>
</dbReference>
<dbReference type="InterPro" id="IPR018294">
    <property type="entry name" value="ISPD_synthase_CS"/>
</dbReference>
<dbReference type="InterPro" id="IPR029044">
    <property type="entry name" value="Nucleotide-diphossugar_trans"/>
</dbReference>
<dbReference type="NCBIfam" id="TIGR00453">
    <property type="entry name" value="ispD"/>
    <property type="match status" value="1"/>
</dbReference>
<dbReference type="PANTHER" id="PTHR32125">
    <property type="entry name" value="2-C-METHYL-D-ERYTHRITOL 4-PHOSPHATE CYTIDYLYLTRANSFERASE, CHLOROPLASTIC"/>
    <property type="match status" value="1"/>
</dbReference>
<dbReference type="PANTHER" id="PTHR32125:SF4">
    <property type="entry name" value="2-C-METHYL-D-ERYTHRITOL 4-PHOSPHATE CYTIDYLYLTRANSFERASE, CHLOROPLASTIC"/>
    <property type="match status" value="1"/>
</dbReference>
<dbReference type="Pfam" id="PF01128">
    <property type="entry name" value="IspD"/>
    <property type="match status" value="1"/>
</dbReference>
<dbReference type="SUPFAM" id="SSF53448">
    <property type="entry name" value="Nucleotide-diphospho-sugar transferases"/>
    <property type="match status" value="1"/>
</dbReference>
<dbReference type="PROSITE" id="PS01295">
    <property type="entry name" value="ISPD"/>
    <property type="match status" value="1"/>
</dbReference>
<sequence>MTSRLFALIPCAGTGSRSGSALPKQYRTLAGRALLHYTLAAFDACSEFAQTLVVISPDDAHFDARRFAGLRFAVRRCGGASRQASVMNGLIQLAEFGATDADWVLVHDAARPGITPALIRTLIGALKDDPVGGIVALPVADTLKRVPAGGDAIERTESRNGLWQAQTPQMFRIGMLRDAIRRAQLDGHDLTDEASAIEWAGHTPRVVQGSLRNFKVTYPEDFDLAEAILAQPARAS</sequence>
<comment type="function">
    <text evidence="1">Catalyzes the formation of 4-diphosphocytidyl-2-C-methyl-D-erythritol from CTP and 2-C-methyl-D-erythritol 4-phosphate (MEP).</text>
</comment>
<comment type="catalytic activity">
    <reaction evidence="1">
        <text>2-C-methyl-D-erythritol 4-phosphate + CTP + H(+) = 4-CDP-2-C-methyl-D-erythritol + diphosphate</text>
        <dbReference type="Rhea" id="RHEA:13429"/>
        <dbReference type="ChEBI" id="CHEBI:15378"/>
        <dbReference type="ChEBI" id="CHEBI:33019"/>
        <dbReference type="ChEBI" id="CHEBI:37563"/>
        <dbReference type="ChEBI" id="CHEBI:57823"/>
        <dbReference type="ChEBI" id="CHEBI:58262"/>
        <dbReference type="EC" id="2.7.7.60"/>
    </reaction>
</comment>
<comment type="pathway">
    <text evidence="1">Isoprenoid biosynthesis; isopentenyl diphosphate biosynthesis via DXP pathway; isopentenyl diphosphate from 1-deoxy-D-xylulose 5-phosphate: step 2/6.</text>
</comment>
<comment type="similarity">
    <text evidence="1">Belongs to the IspD/TarI cytidylyltransferase family. IspD subfamily.</text>
</comment>
<keyword id="KW-0414">Isoprene biosynthesis</keyword>
<keyword id="KW-0548">Nucleotidyltransferase</keyword>
<keyword id="KW-0808">Transferase</keyword>
<protein>
    <recommendedName>
        <fullName evidence="1">2-C-methyl-D-erythritol 4-phosphate cytidylyltransferase</fullName>
        <ecNumber evidence="1">2.7.7.60</ecNumber>
    </recommendedName>
    <alternativeName>
        <fullName evidence="1">4-diphosphocytidyl-2C-methyl-D-erythritol synthase</fullName>
    </alternativeName>
    <alternativeName>
        <fullName evidence="1">MEP cytidylyltransferase</fullName>
        <shortName evidence="1">MCT</shortName>
    </alternativeName>
</protein>
<evidence type="ECO:0000255" key="1">
    <source>
        <dbReference type="HAMAP-Rule" id="MF_00108"/>
    </source>
</evidence>
<organism>
    <name type="scientific">Burkholderia pseudomallei (strain 1710b)</name>
    <dbReference type="NCBI Taxonomy" id="320372"/>
    <lineage>
        <taxon>Bacteria</taxon>
        <taxon>Pseudomonadati</taxon>
        <taxon>Pseudomonadota</taxon>
        <taxon>Betaproteobacteria</taxon>
        <taxon>Burkholderiales</taxon>
        <taxon>Burkholderiaceae</taxon>
        <taxon>Burkholderia</taxon>
        <taxon>pseudomallei group</taxon>
    </lineage>
</organism>
<proteinExistence type="inferred from homology"/>
<accession>Q3JR99</accession>
<name>ISPD_BURP1</name>
<reference key="1">
    <citation type="journal article" date="2010" name="Genome Biol. Evol.">
        <title>Continuing evolution of Burkholderia mallei through genome reduction and large-scale rearrangements.</title>
        <authorList>
            <person name="Losada L."/>
            <person name="Ronning C.M."/>
            <person name="DeShazer D."/>
            <person name="Woods D."/>
            <person name="Fedorova N."/>
            <person name="Kim H.S."/>
            <person name="Shabalina S.A."/>
            <person name="Pearson T.R."/>
            <person name="Brinkac L."/>
            <person name="Tan P."/>
            <person name="Nandi T."/>
            <person name="Crabtree J."/>
            <person name="Badger J."/>
            <person name="Beckstrom-Sternberg S."/>
            <person name="Saqib M."/>
            <person name="Schutzer S.E."/>
            <person name="Keim P."/>
            <person name="Nierman W.C."/>
        </authorList>
    </citation>
    <scope>NUCLEOTIDE SEQUENCE [LARGE SCALE GENOMIC DNA]</scope>
    <source>
        <strain>1710b</strain>
    </source>
</reference>
<gene>
    <name evidence="1" type="primary">ispD</name>
    <name type="ordered locus">BURPS1710b_2512</name>
</gene>
<feature type="chain" id="PRO_0000237778" description="2-C-methyl-D-erythritol 4-phosphate cytidylyltransferase">
    <location>
        <begin position="1"/>
        <end position="236"/>
    </location>
</feature>
<feature type="site" description="Transition state stabilizer" evidence="1">
    <location>
        <position position="17"/>
    </location>
</feature>
<feature type="site" description="Transition state stabilizer" evidence="1">
    <location>
        <position position="24"/>
    </location>
</feature>
<feature type="site" description="Positions MEP for the nucleophilic attack" evidence="1">
    <location>
        <position position="159"/>
    </location>
</feature>
<feature type="site" description="Positions MEP for the nucleophilic attack" evidence="1">
    <location>
        <position position="215"/>
    </location>
</feature>